<keyword id="KW-0030">Aminoacyl-tRNA synthetase</keyword>
<keyword id="KW-0067">ATP-binding</keyword>
<keyword id="KW-0963">Cytoplasm</keyword>
<keyword id="KW-0436">Ligase</keyword>
<keyword id="KW-0547">Nucleotide-binding</keyword>
<keyword id="KW-0648">Protein biosynthesis</keyword>
<keyword id="KW-1185">Reference proteome</keyword>
<sequence length="432" mass="49183">MIERVKGTRDFLPEEMVKRRWVFERIRERFETYGFKEVLTPTMEYTKLFELRSGEEVVKQLYAFKDKGGRDVSLRPDMTSSVARLYVNMFQTAPKPIKWYYIANMFRYEEPQSGRYREFWQAGVELIGSDKVEADAEVIALFVESYLATGLREFTVNIGDRILLDEFAKMLGVKDDIGLMRIIDKKDKLPQEDFINALKEFGLDKNGIEKVLELINIKGKPDEVLPLAEELFTSEVAKNEINRLYALIDLLEAYEVKDWIRIDLGIARGFDYYTSIVFEAIAPNDLGIGSIGGGGRYDNLIEVFGGKPTPATGFAIGIERLIPILEAKGLIPEVQIAPDVYVVPIGERMKKVAIRIATSLRKSGIKTEIELMGRKLKKAMDYANKVGVKKTIIVGEKDLERGVVTVRDMESGEQNEVKIDDIVEFMKNALKT</sequence>
<gene>
    <name evidence="1" type="primary">hisS</name>
    <name type="ordered locus">PF0264</name>
</gene>
<reference key="1">
    <citation type="journal article" date="1999" name="Genetics">
        <title>Divergence of the hyperthermophilic archaea Pyrococcus furiosus and P. horikoshii inferred from complete genomic sequences.</title>
        <authorList>
            <person name="Maeder D.L."/>
            <person name="Weiss R.B."/>
            <person name="Dunn D.M."/>
            <person name="Cherry J.L."/>
            <person name="Gonzalez J.M."/>
            <person name="DiRuggiero J."/>
            <person name="Robb F.T."/>
        </authorList>
    </citation>
    <scope>NUCLEOTIDE SEQUENCE [LARGE SCALE GENOMIC DNA]</scope>
    <source>
        <strain>ATCC 43587 / DSM 3638 / JCM 8422 / Vc1</strain>
    </source>
</reference>
<accession>Q8U431</accession>
<name>SYH_PYRFU</name>
<evidence type="ECO:0000255" key="1">
    <source>
        <dbReference type="HAMAP-Rule" id="MF_00127"/>
    </source>
</evidence>
<organism>
    <name type="scientific">Pyrococcus furiosus (strain ATCC 43587 / DSM 3638 / JCM 8422 / Vc1)</name>
    <dbReference type="NCBI Taxonomy" id="186497"/>
    <lineage>
        <taxon>Archaea</taxon>
        <taxon>Methanobacteriati</taxon>
        <taxon>Methanobacteriota</taxon>
        <taxon>Thermococci</taxon>
        <taxon>Thermococcales</taxon>
        <taxon>Thermococcaceae</taxon>
        <taxon>Pyrococcus</taxon>
    </lineage>
</organism>
<feature type="chain" id="PRO_0000136321" description="Histidine--tRNA ligase">
    <location>
        <begin position="1"/>
        <end position="432"/>
    </location>
</feature>
<comment type="catalytic activity">
    <reaction evidence="1">
        <text>tRNA(His) + L-histidine + ATP = L-histidyl-tRNA(His) + AMP + diphosphate + H(+)</text>
        <dbReference type="Rhea" id="RHEA:17313"/>
        <dbReference type="Rhea" id="RHEA-COMP:9665"/>
        <dbReference type="Rhea" id="RHEA-COMP:9689"/>
        <dbReference type="ChEBI" id="CHEBI:15378"/>
        <dbReference type="ChEBI" id="CHEBI:30616"/>
        <dbReference type="ChEBI" id="CHEBI:33019"/>
        <dbReference type="ChEBI" id="CHEBI:57595"/>
        <dbReference type="ChEBI" id="CHEBI:78442"/>
        <dbReference type="ChEBI" id="CHEBI:78527"/>
        <dbReference type="ChEBI" id="CHEBI:456215"/>
        <dbReference type="EC" id="6.1.1.21"/>
    </reaction>
</comment>
<comment type="subcellular location">
    <subcellularLocation>
        <location evidence="1">Cytoplasm</location>
    </subcellularLocation>
</comment>
<comment type="similarity">
    <text evidence="1">Belongs to the class-II aminoacyl-tRNA synthetase family.</text>
</comment>
<protein>
    <recommendedName>
        <fullName evidence="1">Histidine--tRNA ligase</fullName>
        <ecNumber evidence="1">6.1.1.21</ecNumber>
    </recommendedName>
    <alternativeName>
        <fullName evidence="1">Histidyl-tRNA synthetase</fullName>
        <shortName evidence="1">HisRS</shortName>
    </alternativeName>
</protein>
<dbReference type="EC" id="6.1.1.21" evidence="1"/>
<dbReference type="EMBL" id="AE009950">
    <property type="protein sequence ID" value="AAL80388.1"/>
    <property type="molecule type" value="Genomic_DNA"/>
</dbReference>
<dbReference type="RefSeq" id="WP_011011379.1">
    <property type="nucleotide sequence ID" value="NZ_CP023154.1"/>
</dbReference>
<dbReference type="SMR" id="Q8U431"/>
<dbReference type="STRING" id="186497.PF0264"/>
<dbReference type="PaxDb" id="186497-PF0264"/>
<dbReference type="GeneID" id="41712054"/>
<dbReference type="KEGG" id="pfu:PF0264"/>
<dbReference type="PATRIC" id="fig|186497.12.peg.276"/>
<dbReference type="eggNOG" id="arCOG00404">
    <property type="taxonomic scope" value="Archaea"/>
</dbReference>
<dbReference type="HOGENOM" id="CLU_025113_3_0_2"/>
<dbReference type="OrthoDB" id="8659at2157"/>
<dbReference type="PhylomeDB" id="Q8U431"/>
<dbReference type="Proteomes" id="UP000001013">
    <property type="component" value="Chromosome"/>
</dbReference>
<dbReference type="GO" id="GO:0005737">
    <property type="term" value="C:cytoplasm"/>
    <property type="evidence" value="ECO:0007669"/>
    <property type="project" value="UniProtKB-SubCell"/>
</dbReference>
<dbReference type="GO" id="GO:0005524">
    <property type="term" value="F:ATP binding"/>
    <property type="evidence" value="ECO:0007669"/>
    <property type="project" value="UniProtKB-UniRule"/>
</dbReference>
<dbReference type="GO" id="GO:0004821">
    <property type="term" value="F:histidine-tRNA ligase activity"/>
    <property type="evidence" value="ECO:0007669"/>
    <property type="project" value="UniProtKB-UniRule"/>
</dbReference>
<dbReference type="GO" id="GO:0006427">
    <property type="term" value="P:histidyl-tRNA aminoacylation"/>
    <property type="evidence" value="ECO:0007669"/>
    <property type="project" value="UniProtKB-UniRule"/>
</dbReference>
<dbReference type="GO" id="GO:0000105">
    <property type="term" value="P:L-histidine biosynthetic process"/>
    <property type="evidence" value="ECO:0007669"/>
    <property type="project" value="InterPro"/>
</dbReference>
<dbReference type="CDD" id="cd00773">
    <property type="entry name" value="HisRS-like_core"/>
    <property type="match status" value="1"/>
</dbReference>
<dbReference type="CDD" id="cd00859">
    <property type="entry name" value="HisRS_anticodon"/>
    <property type="match status" value="1"/>
</dbReference>
<dbReference type="FunFam" id="3.30.930.10:FF:000054">
    <property type="entry name" value="Histidine--tRNA ligase chloroplastic/mitochondrial"/>
    <property type="match status" value="1"/>
</dbReference>
<dbReference type="Gene3D" id="3.40.50.800">
    <property type="entry name" value="Anticodon-binding domain"/>
    <property type="match status" value="1"/>
</dbReference>
<dbReference type="Gene3D" id="3.30.930.10">
    <property type="entry name" value="Bira Bifunctional Protein, Domain 2"/>
    <property type="match status" value="1"/>
</dbReference>
<dbReference type="HAMAP" id="MF_00127">
    <property type="entry name" value="His_tRNA_synth"/>
    <property type="match status" value="1"/>
</dbReference>
<dbReference type="HAMAP" id="MF_00125">
    <property type="entry name" value="HisZ"/>
    <property type="match status" value="1"/>
</dbReference>
<dbReference type="InterPro" id="IPR006195">
    <property type="entry name" value="aa-tRNA-synth_II"/>
</dbReference>
<dbReference type="InterPro" id="IPR045864">
    <property type="entry name" value="aa-tRNA-synth_II/BPL/LPL"/>
</dbReference>
<dbReference type="InterPro" id="IPR004154">
    <property type="entry name" value="Anticodon-bd"/>
</dbReference>
<dbReference type="InterPro" id="IPR036621">
    <property type="entry name" value="Anticodon-bd_dom_sf"/>
</dbReference>
<dbReference type="InterPro" id="IPR015807">
    <property type="entry name" value="His-tRNA-ligase"/>
</dbReference>
<dbReference type="InterPro" id="IPR041715">
    <property type="entry name" value="HisRS-like_core"/>
</dbReference>
<dbReference type="InterPro" id="IPR004516">
    <property type="entry name" value="HisRS/HisZ"/>
</dbReference>
<dbReference type="InterPro" id="IPR033656">
    <property type="entry name" value="HisRS_anticodon"/>
</dbReference>
<dbReference type="InterPro" id="IPR004517">
    <property type="entry name" value="HisZ"/>
</dbReference>
<dbReference type="NCBIfam" id="TIGR00442">
    <property type="entry name" value="hisS"/>
    <property type="match status" value="1"/>
</dbReference>
<dbReference type="NCBIfam" id="TIGR00443">
    <property type="entry name" value="hisZ_biosyn_reg"/>
    <property type="match status" value="1"/>
</dbReference>
<dbReference type="PANTHER" id="PTHR43707:SF1">
    <property type="entry name" value="HISTIDINE--TRNA LIGASE, MITOCHONDRIAL-RELATED"/>
    <property type="match status" value="1"/>
</dbReference>
<dbReference type="PANTHER" id="PTHR43707">
    <property type="entry name" value="HISTIDYL-TRNA SYNTHETASE"/>
    <property type="match status" value="1"/>
</dbReference>
<dbReference type="Pfam" id="PF03129">
    <property type="entry name" value="HGTP_anticodon"/>
    <property type="match status" value="1"/>
</dbReference>
<dbReference type="Pfam" id="PF13393">
    <property type="entry name" value="tRNA-synt_His"/>
    <property type="match status" value="1"/>
</dbReference>
<dbReference type="PIRSF" id="PIRSF001549">
    <property type="entry name" value="His-tRNA_synth"/>
    <property type="match status" value="1"/>
</dbReference>
<dbReference type="SUPFAM" id="SSF52954">
    <property type="entry name" value="Class II aaRS ABD-related"/>
    <property type="match status" value="1"/>
</dbReference>
<dbReference type="SUPFAM" id="SSF55681">
    <property type="entry name" value="Class II aaRS and biotin synthetases"/>
    <property type="match status" value="1"/>
</dbReference>
<dbReference type="PROSITE" id="PS50862">
    <property type="entry name" value="AA_TRNA_LIGASE_II"/>
    <property type="match status" value="1"/>
</dbReference>
<proteinExistence type="inferred from homology"/>